<comment type="function">
    <text evidence="1">Catalyzes the isomerization between 2-isopropylmalate and 3-isopropylmalate, via the formation of 2-isopropylmaleate.</text>
</comment>
<comment type="catalytic activity">
    <reaction evidence="1">
        <text>(2R,3S)-3-isopropylmalate = (2S)-2-isopropylmalate</text>
        <dbReference type="Rhea" id="RHEA:32287"/>
        <dbReference type="ChEBI" id="CHEBI:1178"/>
        <dbReference type="ChEBI" id="CHEBI:35121"/>
        <dbReference type="EC" id="4.2.1.33"/>
    </reaction>
</comment>
<comment type="pathway">
    <text evidence="1">Amino-acid biosynthesis; L-leucine biosynthesis; L-leucine from 3-methyl-2-oxobutanoate: step 2/4.</text>
</comment>
<comment type="subunit">
    <text evidence="1">Heterodimer of LeuC and LeuD.</text>
</comment>
<comment type="similarity">
    <text evidence="1">Belongs to the LeuD family. LeuD type 1 subfamily.</text>
</comment>
<sequence length="201" mass="21953">MQPFTSHTGLAVMIDSANIDTDQIIPKQFLSKVTRDGFGVHLFHDWRYLDDAGDVPNPDFTLNKPRYSGASILLAQENFGCGSSREHAPWALADFGLRAIIAPSFADIFYGNSINNGLLPVKLSANEVRQLMDEVASEEGAQITVDLTTCKVISPSGAEFSFTLAESARHKLLNGLDAIGLTLSHGTQIGEYEANIPSWRR</sequence>
<feature type="chain" id="PRO_1000063838" description="3-isopropylmalate dehydratase small subunit">
    <location>
        <begin position="1"/>
        <end position="201"/>
    </location>
</feature>
<protein>
    <recommendedName>
        <fullName evidence="1">3-isopropylmalate dehydratase small subunit</fullName>
        <ecNumber evidence="1">4.2.1.33</ecNumber>
    </recommendedName>
    <alternativeName>
        <fullName evidence="1">Alpha-IPM isomerase</fullName>
        <shortName evidence="1">IPMI</shortName>
    </alternativeName>
    <alternativeName>
        <fullName evidence="1">Isopropylmalate isomerase</fullName>
    </alternativeName>
</protein>
<keyword id="KW-0028">Amino-acid biosynthesis</keyword>
<keyword id="KW-0100">Branched-chain amino acid biosynthesis</keyword>
<keyword id="KW-0432">Leucine biosynthesis</keyword>
<keyword id="KW-0456">Lyase</keyword>
<gene>
    <name evidence="1" type="primary">leuD</name>
    <name type="ordered locus">Shewmr4_3585</name>
</gene>
<organism>
    <name type="scientific">Shewanella sp. (strain MR-4)</name>
    <dbReference type="NCBI Taxonomy" id="60480"/>
    <lineage>
        <taxon>Bacteria</taxon>
        <taxon>Pseudomonadati</taxon>
        <taxon>Pseudomonadota</taxon>
        <taxon>Gammaproteobacteria</taxon>
        <taxon>Alteromonadales</taxon>
        <taxon>Shewanellaceae</taxon>
        <taxon>Shewanella</taxon>
    </lineage>
</organism>
<name>LEUD_SHESM</name>
<accession>Q0HE68</accession>
<dbReference type="EC" id="4.2.1.33" evidence="1"/>
<dbReference type="EMBL" id="CP000446">
    <property type="protein sequence ID" value="ABI40649.1"/>
    <property type="molecule type" value="Genomic_DNA"/>
</dbReference>
<dbReference type="RefSeq" id="WP_011624312.1">
    <property type="nucleotide sequence ID" value="NC_008321.1"/>
</dbReference>
<dbReference type="SMR" id="Q0HE68"/>
<dbReference type="KEGG" id="she:Shewmr4_3585"/>
<dbReference type="HOGENOM" id="CLU_081378_0_3_6"/>
<dbReference type="UniPathway" id="UPA00048">
    <property type="reaction ID" value="UER00071"/>
</dbReference>
<dbReference type="GO" id="GO:0009316">
    <property type="term" value="C:3-isopropylmalate dehydratase complex"/>
    <property type="evidence" value="ECO:0007669"/>
    <property type="project" value="InterPro"/>
</dbReference>
<dbReference type="GO" id="GO:0003861">
    <property type="term" value="F:3-isopropylmalate dehydratase activity"/>
    <property type="evidence" value="ECO:0007669"/>
    <property type="project" value="UniProtKB-UniRule"/>
</dbReference>
<dbReference type="GO" id="GO:0009098">
    <property type="term" value="P:L-leucine biosynthetic process"/>
    <property type="evidence" value="ECO:0007669"/>
    <property type="project" value="UniProtKB-UniRule"/>
</dbReference>
<dbReference type="CDD" id="cd01577">
    <property type="entry name" value="IPMI_Swivel"/>
    <property type="match status" value="1"/>
</dbReference>
<dbReference type="FunFam" id="3.20.19.10:FF:000003">
    <property type="entry name" value="3-isopropylmalate dehydratase small subunit"/>
    <property type="match status" value="1"/>
</dbReference>
<dbReference type="Gene3D" id="3.20.19.10">
    <property type="entry name" value="Aconitase, domain 4"/>
    <property type="match status" value="1"/>
</dbReference>
<dbReference type="HAMAP" id="MF_01031">
    <property type="entry name" value="LeuD_type1"/>
    <property type="match status" value="1"/>
</dbReference>
<dbReference type="InterPro" id="IPR004431">
    <property type="entry name" value="3-IsopropMal_deHydase_ssu"/>
</dbReference>
<dbReference type="InterPro" id="IPR015928">
    <property type="entry name" value="Aconitase/3IPM_dehydase_swvl"/>
</dbReference>
<dbReference type="InterPro" id="IPR000573">
    <property type="entry name" value="AconitaseA/IPMdHydase_ssu_swvl"/>
</dbReference>
<dbReference type="InterPro" id="IPR033940">
    <property type="entry name" value="IPMI_Swivel"/>
</dbReference>
<dbReference type="InterPro" id="IPR050075">
    <property type="entry name" value="LeuD"/>
</dbReference>
<dbReference type="NCBIfam" id="TIGR00171">
    <property type="entry name" value="leuD"/>
    <property type="match status" value="1"/>
</dbReference>
<dbReference type="NCBIfam" id="NF002458">
    <property type="entry name" value="PRK01641.1"/>
    <property type="match status" value="1"/>
</dbReference>
<dbReference type="PANTHER" id="PTHR43345:SF5">
    <property type="entry name" value="3-ISOPROPYLMALATE DEHYDRATASE SMALL SUBUNIT"/>
    <property type="match status" value="1"/>
</dbReference>
<dbReference type="PANTHER" id="PTHR43345">
    <property type="entry name" value="3-ISOPROPYLMALATE DEHYDRATASE SMALL SUBUNIT 2-RELATED-RELATED"/>
    <property type="match status" value="1"/>
</dbReference>
<dbReference type="Pfam" id="PF00694">
    <property type="entry name" value="Aconitase_C"/>
    <property type="match status" value="1"/>
</dbReference>
<dbReference type="SUPFAM" id="SSF52016">
    <property type="entry name" value="LeuD/IlvD-like"/>
    <property type="match status" value="1"/>
</dbReference>
<evidence type="ECO:0000255" key="1">
    <source>
        <dbReference type="HAMAP-Rule" id="MF_01031"/>
    </source>
</evidence>
<proteinExistence type="inferred from homology"/>
<reference key="1">
    <citation type="submission" date="2006-08" db="EMBL/GenBank/DDBJ databases">
        <title>Complete sequence of Shewanella sp. MR-4.</title>
        <authorList>
            <consortium name="US DOE Joint Genome Institute"/>
            <person name="Copeland A."/>
            <person name="Lucas S."/>
            <person name="Lapidus A."/>
            <person name="Barry K."/>
            <person name="Detter J.C."/>
            <person name="Glavina del Rio T."/>
            <person name="Hammon N."/>
            <person name="Israni S."/>
            <person name="Dalin E."/>
            <person name="Tice H."/>
            <person name="Pitluck S."/>
            <person name="Kiss H."/>
            <person name="Brettin T."/>
            <person name="Bruce D."/>
            <person name="Han C."/>
            <person name="Tapia R."/>
            <person name="Gilna P."/>
            <person name="Schmutz J."/>
            <person name="Larimer F."/>
            <person name="Land M."/>
            <person name="Hauser L."/>
            <person name="Kyrpides N."/>
            <person name="Mikhailova N."/>
            <person name="Nealson K."/>
            <person name="Konstantinidis K."/>
            <person name="Klappenbach J."/>
            <person name="Tiedje J."/>
            <person name="Richardson P."/>
        </authorList>
    </citation>
    <scope>NUCLEOTIDE SEQUENCE [LARGE SCALE GENOMIC DNA]</scope>
    <source>
        <strain>MR-4</strain>
    </source>
</reference>